<protein>
    <recommendedName>
        <fullName evidence="6">Transport and Golgi organization protein 1 homolog</fullName>
        <shortName evidence="6">TANGO1</shortName>
    </recommendedName>
</protein>
<comment type="function">
    <text evidence="1">Plays a role in the transport of cargos that are too large to fit into COPII-coated vesicles and require specific mechanisms to be incorporated into membrane-bound carriers and exported from the endoplasmic reticulum. This protein is required for collagen VII (COL7A1) secretion by loading COL7A1 into transport carriers. It may participate in cargo loading of COL7A1 at endoplasmic reticulum exit sites by binding to COPII coat subunits Sec23/24 and guiding SH3-bound COL7A1 into a growing carrier. Does not play a role in global protein secretion and is apparently specific to COL7A1 cargo loading. However, it may participate in secretion of other proteins in cells that do not secrete COL7A1. It is also specifically required for the secretion of lipoproteins by participating in their export from the endoplasmic reticulum. Required for correct assembly of COPII coat components at endoplasmic reticulum exit sites (ERES) and for the localization of SEC16A and membrane-bound ER-resident complexes consisting of MIA2 and PREB/SEC12 to ERES.</text>
</comment>
<comment type="subunit">
    <text evidence="1">Interacts with MIA2. Interacts (via SH3 domain) with COL7A1. Interacts with the COPII coat subunits SEC23A, SEC23B and maybe SEC24C. May interact with APOB and MIA2. Interacts with SEC16A.</text>
</comment>
<comment type="subcellular location">
    <subcellularLocation>
        <location evidence="1">Endoplasmic reticulum membrane</location>
        <topology evidence="1">Single-pass membrane protein</topology>
    </subcellularLocation>
    <text evidence="1">Localizes at endoplasmic reticulum exit sites (ERES), also known as transitional endoplasmic reticulum (tER). SEC16A is required for its proper localization to ERES. After loading of COL7A1 into transport carriers, it is not incorporated into COPII carriers and remains in the endoplasmic reticulum membrane.</text>
</comment>
<comment type="domain">
    <text evidence="1">The proline-rich domain (PRD) contains repeated PPP motifs. A single PPP motif is necessary and sufficient to mediate interaction with the COPII coat subunits SEC23A and SEC23B.</text>
</comment>
<comment type="domain">
    <text evidence="1">Although 2 transmembrane domains are predicted, it only contains one transmembrane domain. The other predicted transmembrane region is probably a hairpin-type region embedded into the membrane, which does not cross the membrane. It is unclear which of the 2 predicted transmembrane regions is the transmembrane or the hairpin-type region.</text>
</comment>
<comment type="similarity">
    <text evidence="6">Belongs to the MIA/OTOR family. Tango1 subfamily.</text>
</comment>
<reference key="1">
    <citation type="journal article" date="2009" name="Science">
        <title>The genome sequence of taurine cattle: a window to ruminant biology and evolution.</title>
        <authorList>
            <consortium name="The bovine genome sequencing and analysis consortium"/>
        </authorList>
    </citation>
    <scope>NUCLEOTIDE SEQUENCE [LARGE SCALE GENOMIC DNA]</scope>
    <source>
        <strain>Hereford</strain>
    </source>
</reference>
<reference key="2">
    <citation type="submission" date="2006-08" db="EMBL/GenBank/DDBJ databases">
        <authorList>
            <consortium name="NIH - Mammalian Gene Collection (MGC) project"/>
        </authorList>
    </citation>
    <scope>NUCLEOTIDE SEQUENCE [LARGE SCALE MRNA] OF 1427-1905</scope>
    <source>
        <strain>Hereford</strain>
        <tissue>Basal ganglia</tissue>
    </source>
</reference>
<evidence type="ECO:0000250" key="1">
    <source>
        <dbReference type="UniProtKB" id="Q5JRA6"/>
    </source>
</evidence>
<evidence type="ECO:0000250" key="2">
    <source>
        <dbReference type="UniProtKB" id="Q8BI84"/>
    </source>
</evidence>
<evidence type="ECO:0000255" key="3"/>
<evidence type="ECO:0000255" key="4">
    <source>
        <dbReference type="PROSITE-ProRule" id="PRU00192"/>
    </source>
</evidence>
<evidence type="ECO:0000256" key="5">
    <source>
        <dbReference type="SAM" id="MobiDB-lite"/>
    </source>
</evidence>
<evidence type="ECO:0000305" key="6"/>
<accession>Q0VC16</accession>
<gene>
    <name evidence="1" type="primary">MIA3</name>
</gene>
<proteinExistence type="evidence at transcript level"/>
<feature type="signal peptide" evidence="3">
    <location>
        <begin position="1"/>
        <end position="22"/>
    </location>
</feature>
<feature type="chain" id="PRO_0000370509" description="Transport and Golgi organization protein 1 homolog">
    <location>
        <begin position="23"/>
        <end position="1905"/>
    </location>
</feature>
<feature type="topological domain" description="Lumenal" evidence="3">
    <location>
        <begin position="23"/>
        <end position="1141"/>
    </location>
</feature>
<feature type="intramembrane region" evidence="3">
    <location>
        <begin position="1142"/>
        <end position="1162"/>
    </location>
</feature>
<feature type="topological domain" description="Lumenal" evidence="3">
    <location>
        <begin position="1163"/>
        <end position="1173"/>
    </location>
</feature>
<feature type="transmembrane region" description="Helical" evidence="3">
    <location>
        <begin position="1174"/>
        <end position="1194"/>
    </location>
</feature>
<feature type="topological domain" description="Cytoplasmic" evidence="3">
    <location>
        <begin position="1195"/>
        <end position="1905"/>
    </location>
</feature>
<feature type="domain" description="SH3" evidence="4">
    <location>
        <begin position="45"/>
        <end position="107"/>
    </location>
</feature>
<feature type="region of interest" description="Disordered" evidence="5">
    <location>
        <begin position="154"/>
        <end position="259"/>
    </location>
</feature>
<feature type="region of interest" description="Disordered" evidence="5">
    <location>
        <begin position="313"/>
        <end position="621"/>
    </location>
</feature>
<feature type="region of interest" description="Disordered" evidence="5">
    <location>
        <begin position="657"/>
        <end position="908"/>
    </location>
</feature>
<feature type="region of interest" description="Disordered" evidence="5">
    <location>
        <begin position="1036"/>
        <end position="1059"/>
    </location>
</feature>
<feature type="region of interest" description="Disordered" evidence="5">
    <location>
        <begin position="1085"/>
        <end position="1118"/>
    </location>
</feature>
<feature type="region of interest" description="Mediates interaction with MIA2" evidence="1">
    <location>
        <begin position="1208"/>
        <end position="1647"/>
    </location>
</feature>
<feature type="region of interest" description="Disordered" evidence="5">
    <location>
        <begin position="1416"/>
        <end position="1443"/>
    </location>
</feature>
<feature type="region of interest" description="Disordered" evidence="5">
    <location>
        <begin position="1639"/>
        <end position="1905"/>
    </location>
</feature>
<feature type="region of interest" description="Proline-rich domain (PRD); mediates interaction with the COPII coat subunits SEC23A and SEC23B" evidence="1">
    <location>
        <begin position="1748"/>
        <end position="1905"/>
    </location>
</feature>
<feature type="region of interest" description="SEC16A-interacting region (SIR); required for its localization to endoplasmic reticulum exit sites and for its interaction with SEC16A" evidence="1">
    <location>
        <begin position="1785"/>
        <end position="1845"/>
    </location>
</feature>
<feature type="coiled-coil region" evidence="3">
    <location>
        <begin position="467"/>
        <end position="527"/>
    </location>
</feature>
<feature type="coiled-coil region" evidence="3">
    <location>
        <begin position="1211"/>
        <end position="1393"/>
    </location>
</feature>
<feature type="coiled-coil region" evidence="3">
    <location>
        <begin position="1484"/>
        <end position="1636"/>
    </location>
</feature>
<feature type="compositionally biased region" description="Basic and acidic residues" evidence="5">
    <location>
        <begin position="154"/>
        <end position="167"/>
    </location>
</feature>
<feature type="compositionally biased region" description="Acidic residues" evidence="5">
    <location>
        <begin position="173"/>
        <end position="190"/>
    </location>
</feature>
<feature type="compositionally biased region" description="Basic and acidic residues" evidence="5">
    <location>
        <begin position="198"/>
        <end position="208"/>
    </location>
</feature>
<feature type="compositionally biased region" description="Polar residues" evidence="5">
    <location>
        <begin position="209"/>
        <end position="220"/>
    </location>
</feature>
<feature type="compositionally biased region" description="Basic and acidic residues" evidence="5">
    <location>
        <begin position="234"/>
        <end position="245"/>
    </location>
</feature>
<feature type="compositionally biased region" description="Polar residues" evidence="5">
    <location>
        <begin position="246"/>
        <end position="255"/>
    </location>
</feature>
<feature type="compositionally biased region" description="Acidic residues" evidence="5">
    <location>
        <begin position="317"/>
        <end position="327"/>
    </location>
</feature>
<feature type="compositionally biased region" description="Basic and acidic residues" evidence="5">
    <location>
        <begin position="337"/>
        <end position="366"/>
    </location>
</feature>
<feature type="compositionally biased region" description="Basic and acidic residues" evidence="5">
    <location>
        <begin position="373"/>
        <end position="386"/>
    </location>
</feature>
<feature type="compositionally biased region" description="Acidic residues" evidence="5">
    <location>
        <begin position="392"/>
        <end position="414"/>
    </location>
</feature>
<feature type="compositionally biased region" description="Basic and acidic residues" evidence="5">
    <location>
        <begin position="419"/>
        <end position="436"/>
    </location>
</feature>
<feature type="compositionally biased region" description="Basic and acidic residues" evidence="5">
    <location>
        <begin position="459"/>
        <end position="480"/>
    </location>
</feature>
<feature type="compositionally biased region" description="Polar residues" evidence="5">
    <location>
        <begin position="488"/>
        <end position="500"/>
    </location>
</feature>
<feature type="compositionally biased region" description="Basic and acidic residues" evidence="5">
    <location>
        <begin position="531"/>
        <end position="542"/>
    </location>
</feature>
<feature type="compositionally biased region" description="Basic and acidic residues" evidence="5">
    <location>
        <begin position="669"/>
        <end position="714"/>
    </location>
</feature>
<feature type="compositionally biased region" description="Acidic residues" evidence="5">
    <location>
        <begin position="715"/>
        <end position="730"/>
    </location>
</feature>
<feature type="compositionally biased region" description="Basic and acidic residues" evidence="5">
    <location>
        <begin position="736"/>
        <end position="751"/>
    </location>
</feature>
<feature type="compositionally biased region" description="Basic and acidic residues" evidence="5">
    <location>
        <begin position="766"/>
        <end position="789"/>
    </location>
</feature>
<feature type="compositionally biased region" description="Basic and acidic residues" evidence="5">
    <location>
        <begin position="842"/>
        <end position="859"/>
    </location>
</feature>
<feature type="compositionally biased region" description="Basic and acidic residues" evidence="5">
    <location>
        <begin position="868"/>
        <end position="884"/>
    </location>
</feature>
<feature type="compositionally biased region" description="Polar residues" evidence="5">
    <location>
        <begin position="1647"/>
        <end position="1664"/>
    </location>
</feature>
<feature type="compositionally biased region" description="Pro residues" evidence="5">
    <location>
        <begin position="1776"/>
        <end position="1806"/>
    </location>
</feature>
<feature type="compositionally biased region" description="Basic and acidic residues" evidence="5">
    <location>
        <begin position="1821"/>
        <end position="1831"/>
    </location>
</feature>
<feature type="compositionally biased region" description="Polar residues" evidence="5">
    <location>
        <begin position="1891"/>
        <end position="1905"/>
    </location>
</feature>
<feature type="modified residue" description="Phosphoserine" evidence="1">
    <location>
        <position position="226"/>
    </location>
</feature>
<feature type="modified residue" description="Phosphoserine" evidence="1">
    <location>
        <position position="229"/>
    </location>
</feature>
<feature type="modified residue" description="Phosphoserine" evidence="1">
    <location>
        <position position="873"/>
    </location>
</feature>
<feature type="modified residue" description="Phosphoserine" evidence="2">
    <location>
        <position position="1428"/>
    </location>
</feature>
<feature type="modified residue" description="Phosphoserine" evidence="2">
    <location>
        <position position="1663"/>
    </location>
</feature>
<feature type="modified residue" description="Phosphoserine" evidence="2">
    <location>
        <position position="1675"/>
    </location>
</feature>
<feature type="modified residue" description="Phosphoserine" evidence="1">
    <location>
        <position position="1703"/>
    </location>
</feature>
<feature type="modified residue" description="Phosphoserine" evidence="2">
    <location>
        <position position="1724"/>
    </location>
</feature>
<feature type="modified residue" description="Phosphoserine" evidence="2">
    <location>
        <position position="1738"/>
    </location>
</feature>
<feature type="modified residue" description="Phosphoserine" evidence="1">
    <location>
        <position position="1742"/>
    </location>
</feature>
<feature type="modified residue" description="Asymmetric dimethylarginine" evidence="2">
    <location>
        <position position="1781"/>
    </location>
</feature>
<feature type="modified residue" description="Phosphoserine" evidence="2">
    <location>
        <position position="1890"/>
    </location>
</feature>
<feature type="modified residue" description="Phosphoserine" evidence="1">
    <location>
        <position position="1904"/>
    </location>
</feature>
<feature type="glycosylation site" description="N-linked (GlcNAc...) asparagine" evidence="3">
    <location>
        <position position="173"/>
    </location>
</feature>
<feature type="glycosylation site" description="N-linked (GlcNAc...) asparagine" evidence="3">
    <location>
        <position position="246"/>
    </location>
</feature>
<feature type="glycosylation site" description="N-linked (GlcNAc...) asparagine" evidence="3">
    <location>
        <position position="627"/>
    </location>
</feature>
<keyword id="KW-0175">Coiled coil</keyword>
<keyword id="KW-0256">Endoplasmic reticulum</keyword>
<keyword id="KW-0931">ER-Golgi transport</keyword>
<keyword id="KW-0268">Exocytosis</keyword>
<keyword id="KW-0325">Glycoprotein</keyword>
<keyword id="KW-0472">Membrane</keyword>
<keyword id="KW-0488">Methylation</keyword>
<keyword id="KW-0597">Phosphoprotein</keyword>
<keyword id="KW-0653">Protein transport</keyword>
<keyword id="KW-1185">Reference proteome</keyword>
<keyword id="KW-0728">SH3 domain</keyword>
<keyword id="KW-0732">Signal</keyword>
<keyword id="KW-0812">Transmembrane</keyword>
<keyword id="KW-1133">Transmembrane helix</keyword>
<keyword id="KW-0813">Transport</keyword>
<sequence length="1905" mass="211668">MAAAQGLLFWLLLLGPPCRVPGQPEQDPGRRFSQFKLCADEECCMLMYRGEALEDFTGPDCRFVNFKKGDTVYVYYKLAGGSPEVWAGSVGHTFGYFPKDLIQVVHEYTQEELQVPTDETDFVCFDGGRDDFDNYNVEDLLGFLELYDSATEDSEKVKEKTAQRVEEPPEASNESDAEPEPGEPNSEESESVLSENTAELRERSEAQKSHPQVNSQTGHAQGERTSFESFGEMLQDKLKVPDSENNKTSNSSQVSHEQEKIDAYKLLKTEMTLDLKTKFGSTADALVSDDETTRLVTSLEDDFVEDLDPEYYTVGKEEEENKEDFDELPLLTFTDGEDTKSPGHSGIEKHPTEKEQNSNKEHKVEETQPPGIKKGDKEIPKHREDTVFSDVMEGEENTDTDLESSDSKEEDDPLVMDSRLGKPRPEDHTDPEKAADHLVNVEVPKADSDDDPEVGAGLHMKDKGRKVEEPRRDWVQHEVGLEDETQEDQAVQGSSQSGHLRSSPAAEKSTETLKSAFANQENDLKGAAVHISKEMLHEEKPSGRSLEGASKSDSVPQAKAAGNQGEEGKTEREPVGVAAPSGDHQPNASKDSVDEVDGSISGPKPHVLSGEHPSAELIKDRLLKLQNQTRFSSPDDMGLPGDLEKKRPILERKLSWQQGGVAAAVNKQVSEKRELPEEEVTRVTKDASDEGQEVRKTGQTDSIEGRGFRPKEPNPEDEDYSPEELLEDENAVSAKQSKERSPEIQDKRLDVDLQNPEKPVSGAIKTDPETEKNKEETRHVSENERKNETAGKAVDSLGRDAGGPVVEKEGSSPVHQKVQRPSEGSDVPGKKQNQTPELGEASQKKDPDYLKEDNHEGHPKTSGLMEKPGVEPSKEDDEHAEKFVDPGSRGSASEDPDDDPFPWAPHAPVQPEESVHLEDLPIISSFFKDQQSLQRFQKYFDIHKLEAMFQDMSSKLKSAQRESLPYNVEKVLDKVFRAWESHILTEAENMLDARVTENRDLETKDSSVFEEAAVLDDVQDLIYFVRYKHSTVEETAPPAAAQPVEGGWDGPAEDTQPPLEENFPQEHMEVPLMQIPKEPGHLAQPVTRDMGTSGVAQKPQTEEDGDPGIITPQGTPVDADDAQKQLAANTEEPASVTPLENAIAFIYSLVFHLTKTLLATLPDDVQPGPDFYGLPWKPVLITASLGIVSFAVFFWRTVLAVKSRVYQVTEQQISEKLKNIMKENAELVQKLSSYEQKIKESKKHVQETKKQNMILSDEAIKFKDKIKSLEETNEILGDTAKSLRAMLESEREQNAKNQDLISENKKSIEKLKDVISVNASEFSEVQIALNEAKLSEEKVKSECHRVQEENARLKKKKEQLQQEIKDWSKSHAELSEQIRSFEKSQKDLEVALTHKDDNINALTNCITQLNRLDCESESEDQNKGGSESDELANGEVGGDRSEKVKNQIKQMMDVSRTQTAISVVEEDLKLLQCKLRASMSTKCNLEDQIKKLEEDRSSLQSAKTVLEDECKTLRQKVEILNELYQQKEMALQKKLSQEEYERQEREQRLSAADEKAVLAAEEVKTYKRRIEEMEDELQKTERSFKNQIATHEKKAHDNWLKARAAERAIAEEKREAANLRHKLLELTQKMAMMQEEPVIVKPMPGRPNTQNPPRRGPLSQNGSFGPSPVSGGECSPPLTADPPARPLSATLNRREMPRSEFGSVDGPLPRPRWASEASGKPSASDPESGAAPTVNSSSRSSSPSKVMDEGKVSMAAKGPPPFPGTPLMSSPVGGPLLPPIRYGPPPQLCGPFGPRPLPPPFGPGMRPPLGLREYAPGVPPGKRDLPLDPREFLPPGHAPFRPLGSLGPREYFFPGTRLPPPNHGPQDYPPSSAARDLPPSGSRDEPPPASQGASQDCSPALKQSP</sequence>
<name>TGO1_BOVIN</name>
<dbReference type="EMBL" id="AAFC03070852">
    <property type="status" value="NOT_ANNOTATED_CDS"/>
    <property type="molecule type" value="Genomic_DNA"/>
</dbReference>
<dbReference type="EMBL" id="AAFC03070853">
    <property type="status" value="NOT_ANNOTATED_CDS"/>
    <property type="molecule type" value="Genomic_DNA"/>
</dbReference>
<dbReference type="EMBL" id="AAFC03010368">
    <property type="status" value="NOT_ANNOTATED_CDS"/>
    <property type="molecule type" value="Genomic_DNA"/>
</dbReference>
<dbReference type="EMBL" id="BC120395">
    <property type="protein sequence ID" value="AAI20396.1"/>
    <property type="molecule type" value="mRNA"/>
</dbReference>
<dbReference type="RefSeq" id="NP_001160043.1">
    <property type="nucleotide sequence ID" value="NM_001166571.1"/>
</dbReference>
<dbReference type="SMR" id="Q0VC16"/>
<dbReference type="FunCoup" id="Q0VC16">
    <property type="interactions" value="1562"/>
</dbReference>
<dbReference type="STRING" id="9913.ENSBTAP00000067728"/>
<dbReference type="GlyCosmos" id="Q0VC16">
    <property type="glycosylation" value="3 sites, No reported glycans"/>
</dbReference>
<dbReference type="GlyGen" id="Q0VC16">
    <property type="glycosylation" value="3 sites"/>
</dbReference>
<dbReference type="PaxDb" id="9913-ENSBTAP00000025055"/>
<dbReference type="PeptideAtlas" id="Q0VC16"/>
<dbReference type="GeneID" id="509133"/>
<dbReference type="KEGG" id="bta:509133"/>
<dbReference type="CTD" id="375056"/>
<dbReference type="eggNOG" id="ENOG502QS87">
    <property type="taxonomic scope" value="Eukaryota"/>
</dbReference>
<dbReference type="InParanoid" id="Q0VC16"/>
<dbReference type="OrthoDB" id="6022771at2759"/>
<dbReference type="Proteomes" id="UP000009136">
    <property type="component" value="Unplaced"/>
</dbReference>
<dbReference type="GO" id="GO:0070971">
    <property type="term" value="C:endoplasmic reticulum exit site"/>
    <property type="evidence" value="ECO:0000250"/>
    <property type="project" value="UniProtKB"/>
</dbReference>
<dbReference type="GO" id="GO:0005789">
    <property type="term" value="C:endoplasmic reticulum membrane"/>
    <property type="evidence" value="ECO:0000250"/>
    <property type="project" value="UniProtKB"/>
</dbReference>
<dbReference type="GO" id="GO:0016020">
    <property type="term" value="C:membrane"/>
    <property type="evidence" value="ECO:0000250"/>
    <property type="project" value="UniProtKB"/>
</dbReference>
<dbReference type="GO" id="GO:0038024">
    <property type="term" value="F:cargo receptor activity"/>
    <property type="evidence" value="ECO:0000250"/>
    <property type="project" value="UniProtKB"/>
</dbReference>
<dbReference type="GO" id="GO:0090110">
    <property type="term" value="P:COPII-coated vesicle cargo loading"/>
    <property type="evidence" value="ECO:0000250"/>
    <property type="project" value="UniProtKB"/>
</dbReference>
<dbReference type="GO" id="GO:0007029">
    <property type="term" value="P:endoplasmic reticulum organization"/>
    <property type="evidence" value="ECO:0000250"/>
    <property type="project" value="UniProtKB"/>
</dbReference>
<dbReference type="GO" id="GO:0006888">
    <property type="term" value="P:endoplasmic reticulum to Golgi vesicle-mediated transport"/>
    <property type="evidence" value="ECO:0000250"/>
    <property type="project" value="UniProtKB"/>
</dbReference>
<dbReference type="GO" id="GO:0006887">
    <property type="term" value="P:exocytosis"/>
    <property type="evidence" value="ECO:0000250"/>
    <property type="project" value="UniProtKB"/>
</dbReference>
<dbReference type="GO" id="GO:0042953">
    <property type="term" value="P:lipoprotein transport"/>
    <property type="evidence" value="ECO:0000250"/>
    <property type="project" value="UniProtKB"/>
</dbReference>
<dbReference type="GO" id="GO:0070973">
    <property type="term" value="P:protein localization to endoplasmic reticulum exit site"/>
    <property type="evidence" value="ECO:0000250"/>
    <property type="project" value="UniProtKB"/>
</dbReference>
<dbReference type="GO" id="GO:0009306">
    <property type="term" value="P:protein secretion"/>
    <property type="evidence" value="ECO:0000318"/>
    <property type="project" value="GO_Central"/>
</dbReference>
<dbReference type="GO" id="GO:0015031">
    <property type="term" value="P:protein transport"/>
    <property type="evidence" value="ECO:0000250"/>
    <property type="project" value="UniProtKB"/>
</dbReference>
<dbReference type="GO" id="GO:0035459">
    <property type="term" value="P:vesicle cargo loading"/>
    <property type="evidence" value="ECO:0000318"/>
    <property type="project" value="GO_Central"/>
</dbReference>
<dbReference type="CDD" id="cd11893">
    <property type="entry name" value="SH3_MIA3"/>
    <property type="match status" value="1"/>
</dbReference>
<dbReference type="FunFam" id="2.30.30.40:FF:000162">
    <property type="entry name" value="MIA SH3 domain ER export factor 3"/>
    <property type="match status" value="1"/>
</dbReference>
<dbReference type="Gene3D" id="2.30.30.40">
    <property type="entry name" value="SH3 Domains"/>
    <property type="match status" value="1"/>
</dbReference>
<dbReference type="InterPro" id="IPR051500">
    <property type="entry name" value="cTAGE_MIA/OTOR"/>
</dbReference>
<dbReference type="InterPro" id="IPR036028">
    <property type="entry name" value="SH3-like_dom_sf"/>
</dbReference>
<dbReference type="InterPro" id="IPR001452">
    <property type="entry name" value="SH3_domain"/>
</dbReference>
<dbReference type="PANTHER" id="PTHR23158">
    <property type="entry name" value="MELANOMA INHIBITORY ACTIVITY-RELATED"/>
    <property type="match status" value="1"/>
</dbReference>
<dbReference type="PANTHER" id="PTHR23158:SF54">
    <property type="entry name" value="TRANSPORT AND GOLGI ORGANIZATION PROTEIN 1 HOMOLOG"/>
    <property type="match status" value="1"/>
</dbReference>
<dbReference type="Pfam" id="PF07653">
    <property type="entry name" value="SH3_2"/>
    <property type="match status" value="1"/>
</dbReference>
<dbReference type="SMART" id="SM00326">
    <property type="entry name" value="SH3"/>
    <property type="match status" value="1"/>
</dbReference>
<dbReference type="SUPFAM" id="SSF50044">
    <property type="entry name" value="SH3-domain"/>
    <property type="match status" value="1"/>
</dbReference>
<dbReference type="PROSITE" id="PS50002">
    <property type="entry name" value="SH3"/>
    <property type="match status" value="1"/>
</dbReference>
<organism>
    <name type="scientific">Bos taurus</name>
    <name type="common">Bovine</name>
    <dbReference type="NCBI Taxonomy" id="9913"/>
    <lineage>
        <taxon>Eukaryota</taxon>
        <taxon>Metazoa</taxon>
        <taxon>Chordata</taxon>
        <taxon>Craniata</taxon>
        <taxon>Vertebrata</taxon>
        <taxon>Euteleostomi</taxon>
        <taxon>Mammalia</taxon>
        <taxon>Eutheria</taxon>
        <taxon>Laurasiatheria</taxon>
        <taxon>Artiodactyla</taxon>
        <taxon>Ruminantia</taxon>
        <taxon>Pecora</taxon>
        <taxon>Bovidae</taxon>
        <taxon>Bovinae</taxon>
        <taxon>Bos</taxon>
    </lineage>
</organism>